<accession>B8D8J3</accession>
<sequence length="525" mass="59036">MPSNNLIKNALISVSDKKNIVEVAEKLIINKINLFSTGGTAQILKKNNIPVTEISDYTKFPEIMDGRVKTLHPKIMGGILGQKQKDQEIMKLYNICPIDIVIVNFYPFEKIKNIKKNDIDNVVNNIDIGGPTLVRASAKNYKNVIVIVDLDDFQSTIDSINNNTMNIEKRFNLASKAFEYTSYYEQIISQYFIEQNSLYKKTNNSLFPNEINFSFIKKQDLRYGENYHQKSSFYIEKNMCDSGTISTACQIQGKTLSYNNISDSDIALECVKQFTKPACVIVKHGNPCSVAVSHNILESYLSAYNSDPISAFGGIISFNCKLDEKTAQTIINQQFVEVIIIPEISKKAVKILQKKQNIRVLVTGKLQNNTVGLDLKKITNGLLVQEYDSHNIDYNSWSFVTKRSPTKKELKDSIFCWQVAKFVKSNAIVYGSDEITIGIGAGQMSRIYSTKLANIKVKDQGKNIIGATMASDAFFPFRDGIDEAASVGISSIIQPGGSIRDEEIIRAADEHNITMIFTKKRHFKH</sequence>
<evidence type="ECO:0000255" key="1">
    <source>
        <dbReference type="HAMAP-Rule" id="MF_00139"/>
    </source>
</evidence>
<evidence type="ECO:0000255" key="2">
    <source>
        <dbReference type="PROSITE-ProRule" id="PRU01202"/>
    </source>
</evidence>
<dbReference type="EC" id="2.1.2.3" evidence="1"/>
<dbReference type="EC" id="3.5.4.10" evidence="1"/>
<dbReference type="EMBL" id="CP001161">
    <property type="protein sequence ID" value="ACL30415.1"/>
    <property type="molecule type" value="Genomic_DNA"/>
</dbReference>
<dbReference type="RefSeq" id="WP_009873991.1">
    <property type="nucleotide sequence ID" value="NC_011833.1"/>
</dbReference>
<dbReference type="SMR" id="B8D8J3"/>
<dbReference type="KEGG" id="bap:BUAP5A_030"/>
<dbReference type="HOGENOM" id="CLU_016316_5_2_6"/>
<dbReference type="OrthoDB" id="9802065at2"/>
<dbReference type="UniPathway" id="UPA00074">
    <property type="reaction ID" value="UER00133"/>
</dbReference>
<dbReference type="UniPathway" id="UPA00074">
    <property type="reaction ID" value="UER00135"/>
</dbReference>
<dbReference type="Proteomes" id="UP000006904">
    <property type="component" value="Chromosome"/>
</dbReference>
<dbReference type="GO" id="GO:0005829">
    <property type="term" value="C:cytosol"/>
    <property type="evidence" value="ECO:0007669"/>
    <property type="project" value="TreeGrafter"/>
</dbReference>
<dbReference type="GO" id="GO:0003937">
    <property type="term" value="F:IMP cyclohydrolase activity"/>
    <property type="evidence" value="ECO:0007669"/>
    <property type="project" value="UniProtKB-UniRule"/>
</dbReference>
<dbReference type="GO" id="GO:0004643">
    <property type="term" value="F:phosphoribosylaminoimidazolecarboxamide formyltransferase activity"/>
    <property type="evidence" value="ECO:0007669"/>
    <property type="project" value="UniProtKB-UniRule"/>
</dbReference>
<dbReference type="GO" id="GO:0006189">
    <property type="term" value="P:'de novo' IMP biosynthetic process"/>
    <property type="evidence" value="ECO:0007669"/>
    <property type="project" value="UniProtKB-UniRule"/>
</dbReference>
<dbReference type="CDD" id="cd01421">
    <property type="entry name" value="IMPCH"/>
    <property type="match status" value="1"/>
</dbReference>
<dbReference type="FunFam" id="3.40.140.20:FF:000001">
    <property type="entry name" value="Bifunctional purine biosynthesis protein PurH"/>
    <property type="match status" value="1"/>
</dbReference>
<dbReference type="FunFam" id="3.40.140.20:FF:000002">
    <property type="entry name" value="Bifunctional purine biosynthesis protein PurH"/>
    <property type="match status" value="1"/>
</dbReference>
<dbReference type="FunFam" id="3.40.50.1380:FF:000001">
    <property type="entry name" value="Bifunctional purine biosynthesis protein PurH"/>
    <property type="match status" value="1"/>
</dbReference>
<dbReference type="Gene3D" id="3.40.140.20">
    <property type="match status" value="2"/>
</dbReference>
<dbReference type="Gene3D" id="3.40.50.1380">
    <property type="entry name" value="Methylglyoxal synthase-like domain"/>
    <property type="match status" value="1"/>
</dbReference>
<dbReference type="HAMAP" id="MF_00139">
    <property type="entry name" value="PurH"/>
    <property type="match status" value="1"/>
</dbReference>
<dbReference type="InterPro" id="IPR024051">
    <property type="entry name" value="AICAR_Tfase_dup_dom_sf"/>
</dbReference>
<dbReference type="InterPro" id="IPR016193">
    <property type="entry name" value="Cytidine_deaminase-like"/>
</dbReference>
<dbReference type="InterPro" id="IPR011607">
    <property type="entry name" value="MGS-like_dom"/>
</dbReference>
<dbReference type="InterPro" id="IPR036914">
    <property type="entry name" value="MGS-like_dom_sf"/>
</dbReference>
<dbReference type="InterPro" id="IPR002695">
    <property type="entry name" value="PurH-like"/>
</dbReference>
<dbReference type="NCBIfam" id="NF002049">
    <property type="entry name" value="PRK00881.1"/>
    <property type="match status" value="1"/>
</dbReference>
<dbReference type="NCBIfam" id="TIGR00355">
    <property type="entry name" value="purH"/>
    <property type="match status" value="1"/>
</dbReference>
<dbReference type="PANTHER" id="PTHR11692:SF0">
    <property type="entry name" value="BIFUNCTIONAL PURINE BIOSYNTHESIS PROTEIN ATIC"/>
    <property type="match status" value="1"/>
</dbReference>
<dbReference type="PANTHER" id="PTHR11692">
    <property type="entry name" value="BIFUNCTIONAL PURINE BIOSYNTHESIS PROTEIN PURH"/>
    <property type="match status" value="1"/>
</dbReference>
<dbReference type="Pfam" id="PF01808">
    <property type="entry name" value="AICARFT_IMPCHas"/>
    <property type="match status" value="1"/>
</dbReference>
<dbReference type="Pfam" id="PF02142">
    <property type="entry name" value="MGS"/>
    <property type="match status" value="1"/>
</dbReference>
<dbReference type="PIRSF" id="PIRSF000414">
    <property type="entry name" value="AICARFT_IMPCHas"/>
    <property type="match status" value="1"/>
</dbReference>
<dbReference type="SMART" id="SM00798">
    <property type="entry name" value="AICARFT_IMPCHas"/>
    <property type="match status" value="1"/>
</dbReference>
<dbReference type="SMART" id="SM00851">
    <property type="entry name" value="MGS"/>
    <property type="match status" value="1"/>
</dbReference>
<dbReference type="SUPFAM" id="SSF53927">
    <property type="entry name" value="Cytidine deaminase-like"/>
    <property type="match status" value="1"/>
</dbReference>
<dbReference type="SUPFAM" id="SSF52335">
    <property type="entry name" value="Methylglyoxal synthase-like"/>
    <property type="match status" value="1"/>
</dbReference>
<dbReference type="PROSITE" id="PS51855">
    <property type="entry name" value="MGS"/>
    <property type="match status" value="1"/>
</dbReference>
<organism>
    <name type="scientific">Buchnera aphidicola subsp. Acyrthosiphon pisum (strain 5A)</name>
    <dbReference type="NCBI Taxonomy" id="563178"/>
    <lineage>
        <taxon>Bacteria</taxon>
        <taxon>Pseudomonadati</taxon>
        <taxon>Pseudomonadota</taxon>
        <taxon>Gammaproteobacteria</taxon>
        <taxon>Enterobacterales</taxon>
        <taxon>Erwiniaceae</taxon>
        <taxon>Buchnera</taxon>
    </lineage>
</organism>
<reference key="1">
    <citation type="journal article" date="2009" name="Science">
        <title>The dynamics and time scale of ongoing genomic erosion in symbiotic bacteria.</title>
        <authorList>
            <person name="Moran N.A."/>
            <person name="McLaughlin H.J."/>
            <person name="Sorek R."/>
        </authorList>
    </citation>
    <scope>NUCLEOTIDE SEQUENCE [LARGE SCALE GENOMIC DNA]</scope>
    <source>
        <strain>5A</strain>
    </source>
</reference>
<keyword id="KW-0378">Hydrolase</keyword>
<keyword id="KW-0511">Multifunctional enzyme</keyword>
<keyword id="KW-0658">Purine biosynthesis</keyword>
<keyword id="KW-0808">Transferase</keyword>
<protein>
    <recommendedName>
        <fullName evidence="1">Bifunctional purine biosynthesis protein PurH</fullName>
    </recommendedName>
    <domain>
        <recommendedName>
            <fullName evidence="1">Phosphoribosylaminoimidazolecarboxamide formyltransferase</fullName>
            <ecNumber evidence="1">2.1.2.3</ecNumber>
        </recommendedName>
        <alternativeName>
            <fullName evidence="1">AICAR transformylase</fullName>
        </alternativeName>
    </domain>
    <domain>
        <recommendedName>
            <fullName evidence="1">IMP cyclohydrolase</fullName>
            <ecNumber evidence="1">3.5.4.10</ecNumber>
        </recommendedName>
        <alternativeName>
            <fullName evidence="1">ATIC</fullName>
        </alternativeName>
        <alternativeName>
            <fullName evidence="1">IMP synthase</fullName>
        </alternativeName>
        <alternativeName>
            <fullName evidence="1">Inosinicase</fullName>
        </alternativeName>
    </domain>
</protein>
<name>PUR9_BUCA5</name>
<comment type="catalytic activity">
    <reaction evidence="1">
        <text>(6R)-10-formyltetrahydrofolate + 5-amino-1-(5-phospho-beta-D-ribosyl)imidazole-4-carboxamide = 5-formamido-1-(5-phospho-D-ribosyl)imidazole-4-carboxamide + (6S)-5,6,7,8-tetrahydrofolate</text>
        <dbReference type="Rhea" id="RHEA:22192"/>
        <dbReference type="ChEBI" id="CHEBI:57453"/>
        <dbReference type="ChEBI" id="CHEBI:58467"/>
        <dbReference type="ChEBI" id="CHEBI:58475"/>
        <dbReference type="ChEBI" id="CHEBI:195366"/>
        <dbReference type="EC" id="2.1.2.3"/>
    </reaction>
</comment>
<comment type="catalytic activity">
    <reaction evidence="1">
        <text>IMP + H2O = 5-formamido-1-(5-phospho-D-ribosyl)imidazole-4-carboxamide</text>
        <dbReference type="Rhea" id="RHEA:18445"/>
        <dbReference type="ChEBI" id="CHEBI:15377"/>
        <dbReference type="ChEBI" id="CHEBI:58053"/>
        <dbReference type="ChEBI" id="CHEBI:58467"/>
        <dbReference type="EC" id="3.5.4.10"/>
    </reaction>
</comment>
<comment type="pathway">
    <text evidence="1">Purine metabolism; IMP biosynthesis via de novo pathway; 5-formamido-1-(5-phospho-D-ribosyl)imidazole-4-carboxamide from 5-amino-1-(5-phospho-D-ribosyl)imidazole-4-carboxamide (10-formyl THF route): step 1/1.</text>
</comment>
<comment type="pathway">
    <text evidence="1">Purine metabolism; IMP biosynthesis via de novo pathway; IMP from 5-formamido-1-(5-phospho-D-ribosyl)imidazole-4-carboxamide: step 1/1.</text>
</comment>
<comment type="domain">
    <text evidence="1">The IMP cyclohydrolase activity resides in the N-terminal region.</text>
</comment>
<comment type="similarity">
    <text evidence="1">Belongs to the PurH family.</text>
</comment>
<gene>
    <name evidence="1" type="primary">purH</name>
    <name type="ordered locus">BUAP5A_030</name>
</gene>
<feature type="chain" id="PRO_1000122950" description="Bifunctional purine biosynthesis protein PurH">
    <location>
        <begin position="1"/>
        <end position="525"/>
    </location>
</feature>
<feature type="domain" description="MGS-like" evidence="2">
    <location>
        <begin position="1"/>
        <end position="148"/>
    </location>
</feature>
<proteinExistence type="inferred from homology"/>